<comment type="function">
    <text evidence="1">Transfers and isomerizes the ribose moiety from AdoMet to the 7-aminomethyl group of 7-deazaguanine (preQ1-tRNA) to give epoxyqueuosine (oQ-tRNA).</text>
</comment>
<comment type="catalytic activity">
    <reaction evidence="1">
        <text>7-aminomethyl-7-carbaguanosine(34) in tRNA + S-adenosyl-L-methionine = epoxyqueuosine(34) in tRNA + adenine + L-methionine + 2 H(+)</text>
        <dbReference type="Rhea" id="RHEA:32155"/>
        <dbReference type="Rhea" id="RHEA-COMP:10342"/>
        <dbReference type="Rhea" id="RHEA-COMP:18582"/>
        <dbReference type="ChEBI" id="CHEBI:15378"/>
        <dbReference type="ChEBI" id="CHEBI:16708"/>
        <dbReference type="ChEBI" id="CHEBI:57844"/>
        <dbReference type="ChEBI" id="CHEBI:59789"/>
        <dbReference type="ChEBI" id="CHEBI:82833"/>
        <dbReference type="ChEBI" id="CHEBI:194443"/>
        <dbReference type="EC" id="2.4.99.17"/>
    </reaction>
</comment>
<comment type="pathway">
    <text evidence="1">tRNA modification; tRNA-queuosine biosynthesis.</text>
</comment>
<comment type="subunit">
    <text evidence="1">Monomer.</text>
</comment>
<comment type="subcellular location">
    <subcellularLocation>
        <location evidence="1">Cytoplasm</location>
    </subcellularLocation>
</comment>
<comment type="similarity">
    <text evidence="1">Belongs to the QueA family.</text>
</comment>
<sequence length="373" mass="42471">MNFEIYNEEIDHKLEAYDYCLDESLIAGKPSKVRHESRLMIVRDSSLKEDYSTNKYTKDLLAELREGDLVVINDTKVMKARLKVELENGQLVELLVLEKSDQSTWLCLAKPAKKLKINKQLNLKSPFAKDIKLKISGIDDETGGRFIKFPENINDLISMNKLLDIFGEIPIPPYIKSSEEESFHENSYQTEYACNPGAVAAPTAGLHLSKSLISNLKKKGILVMPITLHVGYGTFKPIDQEDLSDLKLHKEWVSVSKKVVEEIKRIKKTDRRVIAIGTTSVRALESCYSYAMKDFIPIAKYVDLVIKPGYKFKAVDGLLTNFHLPKSSLLLLVSAMIGRERLLDLYKKATKEKFRFFSYGDAMYISPDSFLEK</sequence>
<dbReference type="EC" id="2.4.99.17" evidence="1"/>
<dbReference type="EMBL" id="CP000552">
    <property type="protein sequence ID" value="ABM71676.1"/>
    <property type="molecule type" value="Genomic_DNA"/>
</dbReference>
<dbReference type="RefSeq" id="WP_011819784.1">
    <property type="nucleotide sequence ID" value="NC_008817.1"/>
</dbReference>
<dbReference type="SMR" id="A2BV65"/>
<dbReference type="STRING" id="167542.P9515_04671"/>
<dbReference type="GeneID" id="60201146"/>
<dbReference type="KEGG" id="pmc:P9515_04671"/>
<dbReference type="eggNOG" id="COG0809">
    <property type="taxonomic scope" value="Bacteria"/>
</dbReference>
<dbReference type="HOGENOM" id="CLU_039110_1_0_3"/>
<dbReference type="OrthoDB" id="9805933at2"/>
<dbReference type="UniPathway" id="UPA00392"/>
<dbReference type="Proteomes" id="UP000001589">
    <property type="component" value="Chromosome"/>
</dbReference>
<dbReference type="GO" id="GO:0005737">
    <property type="term" value="C:cytoplasm"/>
    <property type="evidence" value="ECO:0007669"/>
    <property type="project" value="UniProtKB-SubCell"/>
</dbReference>
<dbReference type="GO" id="GO:0051075">
    <property type="term" value="F:S-adenosylmethionine:tRNA ribosyltransferase-isomerase activity"/>
    <property type="evidence" value="ECO:0007669"/>
    <property type="project" value="UniProtKB-EC"/>
</dbReference>
<dbReference type="GO" id="GO:0008616">
    <property type="term" value="P:queuosine biosynthetic process"/>
    <property type="evidence" value="ECO:0007669"/>
    <property type="project" value="UniProtKB-UniRule"/>
</dbReference>
<dbReference type="GO" id="GO:0002099">
    <property type="term" value="P:tRNA wobble guanine modification"/>
    <property type="evidence" value="ECO:0007669"/>
    <property type="project" value="TreeGrafter"/>
</dbReference>
<dbReference type="Gene3D" id="2.40.10.240">
    <property type="entry name" value="QueA-like"/>
    <property type="match status" value="1"/>
</dbReference>
<dbReference type="Gene3D" id="3.40.1780.10">
    <property type="entry name" value="QueA-like"/>
    <property type="match status" value="1"/>
</dbReference>
<dbReference type="HAMAP" id="MF_00113">
    <property type="entry name" value="QueA"/>
    <property type="match status" value="1"/>
</dbReference>
<dbReference type="InterPro" id="IPR003699">
    <property type="entry name" value="QueA"/>
</dbReference>
<dbReference type="InterPro" id="IPR042118">
    <property type="entry name" value="QueA_dom1"/>
</dbReference>
<dbReference type="InterPro" id="IPR042119">
    <property type="entry name" value="QueA_dom2"/>
</dbReference>
<dbReference type="InterPro" id="IPR036100">
    <property type="entry name" value="QueA_sf"/>
</dbReference>
<dbReference type="NCBIfam" id="NF001140">
    <property type="entry name" value="PRK00147.1"/>
    <property type="match status" value="1"/>
</dbReference>
<dbReference type="NCBIfam" id="TIGR00113">
    <property type="entry name" value="queA"/>
    <property type="match status" value="1"/>
</dbReference>
<dbReference type="PANTHER" id="PTHR30307">
    <property type="entry name" value="S-ADENOSYLMETHIONINE:TRNA RIBOSYLTRANSFERASE-ISOMERASE"/>
    <property type="match status" value="1"/>
</dbReference>
<dbReference type="PANTHER" id="PTHR30307:SF0">
    <property type="entry name" value="S-ADENOSYLMETHIONINE:TRNA RIBOSYLTRANSFERASE-ISOMERASE"/>
    <property type="match status" value="1"/>
</dbReference>
<dbReference type="Pfam" id="PF02547">
    <property type="entry name" value="Queuosine_synth"/>
    <property type="match status" value="1"/>
</dbReference>
<dbReference type="SUPFAM" id="SSF111337">
    <property type="entry name" value="QueA-like"/>
    <property type="match status" value="1"/>
</dbReference>
<organism>
    <name type="scientific">Prochlorococcus marinus (strain MIT 9515)</name>
    <dbReference type="NCBI Taxonomy" id="167542"/>
    <lineage>
        <taxon>Bacteria</taxon>
        <taxon>Bacillati</taxon>
        <taxon>Cyanobacteriota</taxon>
        <taxon>Cyanophyceae</taxon>
        <taxon>Synechococcales</taxon>
        <taxon>Prochlorococcaceae</taxon>
        <taxon>Prochlorococcus</taxon>
    </lineage>
</organism>
<reference key="1">
    <citation type="journal article" date="2007" name="PLoS Genet.">
        <title>Patterns and implications of gene gain and loss in the evolution of Prochlorococcus.</title>
        <authorList>
            <person name="Kettler G.C."/>
            <person name="Martiny A.C."/>
            <person name="Huang K."/>
            <person name="Zucker J."/>
            <person name="Coleman M.L."/>
            <person name="Rodrigue S."/>
            <person name="Chen F."/>
            <person name="Lapidus A."/>
            <person name="Ferriera S."/>
            <person name="Johnson J."/>
            <person name="Steglich C."/>
            <person name="Church G.M."/>
            <person name="Richardson P."/>
            <person name="Chisholm S.W."/>
        </authorList>
    </citation>
    <scope>NUCLEOTIDE SEQUENCE [LARGE SCALE GENOMIC DNA]</scope>
    <source>
        <strain>MIT 9515</strain>
    </source>
</reference>
<accession>A2BV65</accession>
<keyword id="KW-0963">Cytoplasm</keyword>
<keyword id="KW-0671">Queuosine biosynthesis</keyword>
<keyword id="KW-0949">S-adenosyl-L-methionine</keyword>
<keyword id="KW-0808">Transferase</keyword>
<evidence type="ECO:0000255" key="1">
    <source>
        <dbReference type="HAMAP-Rule" id="MF_00113"/>
    </source>
</evidence>
<protein>
    <recommendedName>
        <fullName evidence="1">S-adenosylmethionine:tRNA ribosyltransferase-isomerase</fullName>
        <ecNumber evidence="1">2.4.99.17</ecNumber>
    </recommendedName>
    <alternativeName>
        <fullName evidence="1">Queuosine biosynthesis protein QueA</fullName>
    </alternativeName>
</protein>
<proteinExistence type="inferred from homology"/>
<feature type="chain" id="PRO_1000094800" description="S-adenosylmethionine:tRNA ribosyltransferase-isomerase">
    <location>
        <begin position="1"/>
        <end position="373"/>
    </location>
</feature>
<gene>
    <name evidence="1" type="primary">queA</name>
    <name type="ordered locus">P9515_04671</name>
</gene>
<name>QUEA_PROM5</name>